<comment type="function">
    <text evidence="1">Involved in nucleotide metabolism: produces dUMP, the immediate precursor of thymidine nucleotides and decreases the intracellular concentration of dUTP to avoid uracil incorporation into viral DNA.</text>
</comment>
<comment type="catalytic activity">
    <reaction evidence="1">
        <text>dUTP + H2O = dUMP + diphosphate + H(+)</text>
        <dbReference type="Rhea" id="RHEA:10248"/>
        <dbReference type="ChEBI" id="CHEBI:15377"/>
        <dbReference type="ChEBI" id="CHEBI:15378"/>
        <dbReference type="ChEBI" id="CHEBI:33019"/>
        <dbReference type="ChEBI" id="CHEBI:61555"/>
        <dbReference type="ChEBI" id="CHEBI:246422"/>
        <dbReference type="EC" id="3.6.1.23"/>
    </reaction>
</comment>
<comment type="cofactor">
    <cofactor evidence="1">
        <name>Mg(2+)</name>
        <dbReference type="ChEBI" id="CHEBI:18420"/>
    </cofactor>
</comment>
<comment type="similarity">
    <text evidence="1">Belongs to the dUTPase family.</text>
</comment>
<gene>
    <name evidence="1" type="primary">DUT</name>
    <name type="ordered locus">54</name>
    <name type="ordered locus">EDRF3</name>
</gene>
<sequence>MPYKVPEIYYRFEPQTFYITSPARASNLQLINHNNILVKAGQVTIVSTGIIFPKETSFAFILYGKSAKSIFCHTGLIDPGFQGELKLIVLNKTEDDITLFENDLRVSVTAFVYGVPKLHDYSDLCPPRYSKDAGFDLYLPTDVTVKPRVPNRYSVNICCPAQLKSYKPVLFGRSGLAAKGLTIKVSRWQNQLQIIFYNYTKSQITYTARTRIAQVVFMHKKHLPTTLTRLKPTMHLSENIKYSWARVSFQDIKTFPVQDEKLYSSSKDTSDSQMSRGDAGLGSSGLM</sequence>
<feature type="chain" id="PRO_0000182957" description="Deoxyuridine 5'-triphosphate nucleotidohydrolase">
    <location>
        <begin position="1"/>
        <end position="287"/>
    </location>
</feature>
<feature type="region of interest" description="Disordered" evidence="2">
    <location>
        <begin position="264"/>
        <end position="287"/>
    </location>
</feature>
<feature type="compositionally biased region" description="Low complexity" evidence="2">
    <location>
        <begin position="264"/>
        <end position="275"/>
    </location>
</feature>
<feature type="binding site" evidence="1">
    <location>
        <begin position="173"/>
        <end position="175"/>
    </location>
    <ligand>
        <name>substrate</name>
    </ligand>
</feature>
<reference key="1">
    <citation type="journal article" date="1992" name="J. Virol.">
        <title>Primary structure of the herpesvirus saimiri genome.</title>
        <authorList>
            <person name="Albrecht J.-C."/>
            <person name="Nicholas J."/>
            <person name="Biller D."/>
            <person name="Cameron K.R."/>
            <person name="Biesinger B."/>
            <person name="Newman C."/>
            <person name="Wittmann S."/>
            <person name="Craxton M.A."/>
            <person name="Coleman H."/>
            <person name="Fleckenstein B."/>
            <person name="Honess R.W."/>
        </authorList>
    </citation>
    <scope>NUCLEOTIDE SEQUENCE [LARGE SCALE GENOMIC DNA]</scope>
</reference>
<reference key="2">
    <citation type="journal article" date="1992" name="Virology">
        <title>Analysis of nucleotide sequence of the rightmost 43 kbp of herpesvirus saimiri (HVS) L-DNA: general conservation of genetic organization between HVS and Epstein-Barr virus.</title>
        <authorList>
            <person name="Nicholas J."/>
            <person name="Cameron K.R."/>
            <person name="Coleman H."/>
            <person name="Newman C."/>
            <person name="Honess R.W."/>
        </authorList>
    </citation>
    <scope>NUCLEOTIDE SEQUENCE [GENOMIC DNA]</scope>
</reference>
<accession>Q01034</accession>
<name>DUT_SHV21</name>
<dbReference type="EC" id="3.6.1.23" evidence="1"/>
<dbReference type="EMBL" id="X64346">
    <property type="protein sequence ID" value="CAA45677.1"/>
    <property type="molecule type" value="Genomic_DNA"/>
</dbReference>
<dbReference type="EMBL" id="M86409">
    <property type="protein sequence ID" value="AAA46131.1"/>
    <property type="molecule type" value="Genomic_DNA"/>
</dbReference>
<dbReference type="RefSeq" id="NP_040256.1">
    <property type="nucleotide sequence ID" value="NC_001350.1"/>
</dbReference>
<dbReference type="SMR" id="Q01034"/>
<dbReference type="KEGG" id="vg:1682515"/>
<dbReference type="Proteomes" id="UP000000587">
    <property type="component" value="Segment"/>
</dbReference>
<dbReference type="GO" id="GO:0004170">
    <property type="term" value="F:dUTP diphosphatase activity"/>
    <property type="evidence" value="ECO:0007669"/>
    <property type="project" value="UniProtKB-EC"/>
</dbReference>
<dbReference type="GO" id="GO:0046872">
    <property type="term" value="F:metal ion binding"/>
    <property type="evidence" value="ECO:0007669"/>
    <property type="project" value="UniProtKB-KW"/>
</dbReference>
<dbReference type="GO" id="GO:0046080">
    <property type="term" value="P:dUTP metabolic process"/>
    <property type="evidence" value="ECO:0007669"/>
    <property type="project" value="InterPro"/>
</dbReference>
<dbReference type="Gene3D" id="2.70.40.10">
    <property type="match status" value="2"/>
</dbReference>
<dbReference type="HAMAP" id="MF_04031">
    <property type="entry name" value="HSV_DUT"/>
    <property type="match status" value="1"/>
</dbReference>
<dbReference type="InterPro" id="IPR029054">
    <property type="entry name" value="dUTPase-like"/>
</dbReference>
<dbReference type="InterPro" id="IPR036157">
    <property type="entry name" value="dUTPase-like_sf"/>
</dbReference>
<dbReference type="InterPro" id="IPR034745">
    <property type="entry name" value="HSV_DUT"/>
</dbReference>
<dbReference type="Pfam" id="PF00692">
    <property type="entry name" value="dUTPase"/>
    <property type="match status" value="2"/>
</dbReference>
<dbReference type="SUPFAM" id="SSF51283">
    <property type="entry name" value="dUTPase-like"/>
    <property type="match status" value="2"/>
</dbReference>
<organism>
    <name type="scientific">Saimiriine herpesvirus 2 (strain 11)</name>
    <name type="common">SaHV-2</name>
    <name type="synonym">Herpesvirus saimiri</name>
    <dbReference type="NCBI Taxonomy" id="10383"/>
    <lineage>
        <taxon>Viruses</taxon>
        <taxon>Duplodnaviria</taxon>
        <taxon>Heunggongvirae</taxon>
        <taxon>Peploviricota</taxon>
        <taxon>Herviviricetes</taxon>
        <taxon>Herpesvirales</taxon>
        <taxon>Orthoherpesviridae</taxon>
        <taxon>Gammaherpesvirinae</taxon>
        <taxon>Rhadinovirus</taxon>
        <taxon>Rhadinovirus saimiriinegamma2</taxon>
        <taxon>Saimiriine herpesvirus 2</taxon>
    </lineage>
</organism>
<organismHost>
    <name type="scientific">Saimiri sciureus</name>
    <name type="common">Common squirrel monkey</name>
    <dbReference type="NCBI Taxonomy" id="9521"/>
</organismHost>
<proteinExistence type="inferred from homology"/>
<evidence type="ECO:0000255" key="1">
    <source>
        <dbReference type="HAMAP-Rule" id="MF_04031"/>
    </source>
</evidence>
<evidence type="ECO:0000256" key="2">
    <source>
        <dbReference type="SAM" id="MobiDB-lite"/>
    </source>
</evidence>
<keyword id="KW-0378">Hydrolase</keyword>
<keyword id="KW-0460">Magnesium</keyword>
<keyword id="KW-0479">Metal-binding</keyword>
<keyword id="KW-0546">Nucleotide metabolism</keyword>
<keyword id="KW-1185">Reference proteome</keyword>
<protein>
    <recommendedName>
        <fullName evidence="1">Deoxyuridine 5'-triphosphate nucleotidohydrolase</fullName>
        <shortName evidence="1">dUTPase</shortName>
        <ecNumber evidence="1">3.6.1.23</ecNumber>
    </recommendedName>
    <alternativeName>
        <fullName evidence="1">dUTP pyrophosphatase</fullName>
    </alternativeName>
</protein>